<gene>
    <name evidence="1" type="primary">dltC</name>
</gene>
<keyword id="KW-0961">Cell wall biogenesis/degradation</keyword>
<keyword id="KW-0963">Cytoplasm</keyword>
<keyword id="KW-0596">Phosphopantetheine</keyword>
<keyword id="KW-0597">Phosphoprotein</keyword>
<protein>
    <recommendedName>
        <fullName evidence="1">D-alanyl carrier protein</fullName>
        <shortName evidence="1">DCP</shortName>
    </recommendedName>
    <alternativeName>
        <fullName evidence="1">D-alanine--poly(phosphoribitol) ligase subunit 2</fullName>
    </alternativeName>
</protein>
<dbReference type="EMBL" id="AF032440">
    <property type="protein sequence ID" value="AAD01944.1"/>
    <property type="molecule type" value="Genomic_DNA"/>
</dbReference>
<dbReference type="RefSeq" id="WP_047172668.1">
    <property type="nucleotide sequence ID" value="NZ_CP154366.1"/>
</dbReference>
<dbReference type="SMR" id="Q9X2N6"/>
<dbReference type="STRING" id="1288.AWC37_02075"/>
<dbReference type="KEGG" id="sxo:SXYL_01988"/>
<dbReference type="eggNOG" id="COG0236">
    <property type="taxonomic scope" value="Bacteria"/>
</dbReference>
<dbReference type="UniPathway" id="UPA00556"/>
<dbReference type="GO" id="GO:0005737">
    <property type="term" value="C:cytoplasm"/>
    <property type="evidence" value="ECO:0007669"/>
    <property type="project" value="UniProtKB-SubCell"/>
</dbReference>
<dbReference type="GO" id="GO:0036370">
    <property type="term" value="F:D-alanyl carrier activity"/>
    <property type="evidence" value="ECO:0007669"/>
    <property type="project" value="UniProtKB-UniRule"/>
</dbReference>
<dbReference type="GO" id="GO:0071555">
    <property type="term" value="P:cell wall organization"/>
    <property type="evidence" value="ECO:0007669"/>
    <property type="project" value="UniProtKB-KW"/>
</dbReference>
<dbReference type="GO" id="GO:0070395">
    <property type="term" value="P:lipoteichoic acid biosynthetic process"/>
    <property type="evidence" value="ECO:0007669"/>
    <property type="project" value="UniProtKB-UniRule"/>
</dbReference>
<dbReference type="Gene3D" id="1.10.1200.10">
    <property type="entry name" value="ACP-like"/>
    <property type="match status" value="1"/>
</dbReference>
<dbReference type="HAMAP" id="MF_00565">
    <property type="entry name" value="DltC"/>
    <property type="match status" value="1"/>
</dbReference>
<dbReference type="InterPro" id="IPR036736">
    <property type="entry name" value="ACP-like_sf"/>
</dbReference>
<dbReference type="InterPro" id="IPR003230">
    <property type="entry name" value="DltC"/>
</dbReference>
<dbReference type="InterPro" id="IPR009081">
    <property type="entry name" value="PP-bd_ACP"/>
</dbReference>
<dbReference type="NCBIfam" id="TIGR01688">
    <property type="entry name" value="dltC"/>
    <property type="match status" value="1"/>
</dbReference>
<dbReference type="NCBIfam" id="NF003464">
    <property type="entry name" value="PRK05087.1"/>
    <property type="match status" value="1"/>
</dbReference>
<dbReference type="Pfam" id="PF00550">
    <property type="entry name" value="PP-binding"/>
    <property type="match status" value="1"/>
</dbReference>
<dbReference type="SUPFAM" id="SSF47336">
    <property type="entry name" value="ACP-like"/>
    <property type="match status" value="1"/>
</dbReference>
<dbReference type="PROSITE" id="PS50075">
    <property type="entry name" value="CARRIER"/>
    <property type="match status" value="1"/>
</dbReference>
<reference key="1">
    <citation type="journal article" date="1999" name="J. Biol. Chem.">
        <title>Inactivation of the dlt operon in Staphylococcus aureus confers sensitivity to defensins, protegrins, and other antimicrobial peptides.</title>
        <authorList>
            <person name="Peschel A."/>
            <person name="Otto M."/>
            <person name="Jack R.W."/>
            <person name="Kalbacher H."/>
            <person name="Jung G."/>
            <person name="Goetz F."/>
        </authorList>
    </citation>
    <scope>NUCLEOTIDE SEQUENCE [GENOMIC DNA]</scope>
    <source>
        <strain>DSM 20267 / Isolate C2A</strain>
    </source>
</reference>
<sequence>MEFREQVLDLLTEVAENNVIKENPDVELFEEGIFDSFQTVGLLLEIQNKLDIEVSIMDFDRDEWATPNKIVEVLEELR</sequence>
<evidence type="ECO:0000255" key="1">
    <source>
        <dbReference type="HAMAP-Rule" id="MF_00565"/>
    </source>
</evidence>
<organism>
    <name type="scientific">Staphylococcus xylosus</name>
    <dbReference type="NCBI Taxonomy" id="1288"/>
    <lineage>
        <taxon>Bacteria</taxon>
        <taxon>Bacillati</taxon>
        <taxon>Bacillota</taxon>
        <taxon>Bacilli</taxon>
        <taxon>Bacillales</taxon>
        <taxon>Staphylococcaceae</taxon>
        <taxon>Staphylococcus</taxon>
    </lineage>
</organism>
<name>DLTC_STAXY</name>
<proteinExistence type="inferred from homology"/>
<feature type="chain" id="PRO_0000213108" description="D-alanyl carrier protein">
    <location>
        <begin position="1"/>
        <end position="78"/>
    </location>
</feature>
<feature type="domain" description="Carrier" evidence="1">
    <location>
        <begin position="1"/>
        <end position="78"/>
    </location>
</feature>
<feature type="modified residue" description="O-(pantetheine 4'-phosphoryl)serine" evidence="1">
    <location>
        <position position="36"/>
    </location>
</feature>
<accession>Q9X2N6</accession>
<comment type="function">
    <text evidence="1">Carrier protein involved in the D-alanylation of lipoteichoic acid (LTA). The loading of thioester-linked D-alanine onto DltC is catalyzed by D-alanine--D-alanyl carrier protein ligase DltA. The DltC-carried D-alanyl group is further transferred to cell membrane phosphatidylglycerol (PG) by forming an ester bond, probably catalyzed by DltD. D-alanylation of LTA plays an important role in modulating the properties of the cell wall in Gram-positive bacteria, influencing the net charge of the cell wall.</text>
</comment>
<comment type="pathway">
    <text evidence="1">Cell wall biogenesis; lipoteichoic acid biosynthesis.</text>
</comment>
<comment type="subcellular location">
    <subcellularLocation>
        <location evidence="1">Cytoplasm</location>
    </subcellularLocation>
</comment>
<comment type="PTM">
    <text evidence="1">4'-phosphopantetheine is transferred from CoA to a specific serine of apo-DCP.</text>
</comment>
<comment type="similarity">
    <text evidence="1">Belongs to the DltC family.</text>
</comment>